<reference key="1">
    <citation type="journal article" date="2009" name="Plant J.">
        <title>Characterization of genes in the ASYMMETRIC LEAVES2/LATERAL ORGAN BOUNDARIES (AS2/LOB) family in Arabidopsis thaliana, and functional and molecular comparisons between AS2 and other family members.</title>
        <authorList>
            <person name="Matsumura Y."/>
            <person name="Iwakawa H."/>
            <person name="Machida Y."/>
            <person name="Machida C."/>
        </authorList>
    </citation>
    <scope>NUCLEOTIDE SEQUENCE [MRNA]</scope>
    <source>
        <strain>cv. Columbia</strain>
    </source>
</reference>
<reference key="2">
    <citation type="journal article" date="1999" name="Nature">
        <title>Sequence and analysis of chromosome 2 of the plant Arabidopsis thaliana.</title>
        <authorList>
            <person name="Lin X."/>
            <person name="Kaul S."/>
            <person name="Rounsley S.D."/>
            <person name="Shea T.P."/>
            <person name="Benito M.-I."/>
            <person name="Town C.D."/>
            <person name="Fujii C.Y."/>
            <person name="Mason T.M."/>
            <person name="Bowman C.L."/>
            <person name="Barnstead M.E."/>
            <person name="Feldblyum T.V."/>
            <person name="Buell C.R."/>
            <person name="Ketchum K.A."/>
            <person name="Lee J.J."/>
            <person name="Ronning C.M."/>
            <person name="Koo H.L."/>
            <person name="Moffat K.S."/>
            <person name="Cronin L.A."/>
            <person name="Shen M."/>
            <person name="Pai G."/>
            <person name="Van Aken S."/>
            <person name="Umayam L."/>
            <person name="Tallon L.J."/>
            <person name="Gill J.E."/>
            <person name="Adams M.D."/>
            <person name="Carrera A.J."/>
            <person name="Creasy T.H."/>
            <person name="Goodman H.M."/>
            <person name="Somerville C.R."/>
            <person name="Copenhaver G.P."/>
            <person name="Preuss D."/>
            <person name="Nierman W.C."/>
            <person name="White O."/>
            <person name="Eisen J.A."/>
            <person name="Salzberg S.L."/>
            <person name="Fraser C.M."/>
            <person name="Venter J.C."/>
        </authorList>
    </citation>
    <scope>NUCLEOTIDE SEQUENCE [LARGE SCALE GENOMIC DNA]</scope>
    <source>
        <strain>cv. Columbia</strain>
    </source>
</reference>
<reference key="3">
    <citation type="journal article" date="2017" name="Plant J.">
        <title>Araport11: a complete reannotation of the Arabidopsis thaliana reference genome.</title>
        <authorList>
            <person name="Cheng C.Y."/>
            <person name="Krishnakumar V."/>
            <person name="Chan A.P."/>
            <person name="Thibaud-Nissen F."/>
            <person name="Schobel S."/>
            <person name="Town C.D."/>
        </authorList>
    </citation>
    <scope>GENOME REANNOTATION</scope>
    <source>
        <strain>cv. Columbia</strain>
    </source>
</reference>
<reference key="4">
    <citation type="journal article" date="2003" name="Science">
        <title>Empirical analysis of transcriptional activity in the Arabidopsis genome.</title>
        <authorList>
            <person name="Yamada K."/>
            <person name="Lim J."/>
            <person name="Dale J.M."/>
            <person name="Chen H."/>
            <person name="Shinn P."/>
            <person name="Palm C.J."/>
            <person name="Southwick A.M."/>
            <person name="Wu H.C."/>
            <person name="Kim C.J."/>
            <person name="Nguyen M."/>
            <person name="Pham P.K."/>
            <person name="Cheuk R.F."/>
            <person name="Karlin-Newmann G."/>
            <person name="Liu S.X."/>
            <person name="Lam B."/>
            <person name="Sakano H."/>
            <person name="Wu T."/>
            <person name="Yu G."/>
            <person name="Miranda M."/>
            <person name="Quach H.L."/>
            <person name="Tripp M."/>
            <person name="Chang C.H."/>
            <person name="Lee J.M."/>
            <person name="Toriumi M.J."/>
            <person name="Chan M.M."/>
            <person name="Tang C.C."/>
            <person name="Onodera C.S."/>
            <person name="Deng J.M."/>
            <person name="Akiyama K."/>
            <person name="Ansari Y."/>
            <person name="Arakawa T."/>
            <person name="Banh J."/>
            <person name="Banno F."/>
            <person name="Bowser L."/>
            <person name="Brooks S.Y."/>
            <person name="Carninci P."/>
            <person name="Chao Q."/>
            <person name="Choy N."/>
            <person name="Enju A."/>
            <person name="Goldsmith A.D."/>
            <person name="Gurjal M."/>
            <person name="Hansen N.F."/>
            <person name="Hayashizaki Y."/>
            <person name="Johnson-Hopson C."/>
            <person name="Hsuan V.W."/>
            <person name="Iida K."/>
            <person name="Karnes M."/>
            <person name="Khan S."/>
            <person name="Koesema E."/>
            <person name="Ishida J."/>
            <person name="Jiang P.X."/>
            <person name="Jones T."/>
            <person name="Kawai J."/>
            <person name="Kamiya A."/>
            <person name="Meyers C."/>
            <person name="Nakajima M."/>
            <person name="Narusaka M."/>
            <person name="Seki M."/>
            <person name="Sakurai T."/>
            <person name="Satou M."/>
            <person name="Tamse R."/>
            <person name="Vaysberg M."/>
            <person name="Wallender E.K."/>
            <person name="Wong C."/>
            <person name="Yamamura Y."/>
            <person name="Yuan S."/>
            <person name="Shinozaki K."/>
            <person name="Davis R.W."/>
            <person name="Theologis A."/>
            <person name="Ecker J.R."/>
        </authorList>
    </citation>
    <scope>NUCLEOTIDE SEQUENCE [LARGE SCALE MRNA] OF 13-244</scope>
    <source>
        <strain>cv. Columbia</strain>
    </source>
</reference>
<reference key="5">
    <citation type="journal article" date="2002" name="Plant Physiol.">
        <title>The LATERAL ORGAN BOUNDARIES gene defines a novel, plant-specific gene family.</title>
        <authorList>
            <person name="Shuai B."/>
            <person name="Reynaga-Pena C.G."/>
            <person name="Springer P.S."/>
        </authorList>
    </citation>
    <scope>TISSUE SPECIFICITY</scope>
    <scope>GENE FAMILY</scope>
    <scope>NOMENCLATURE</scope>
</reference>
<reference key="6">
    <citation type="journal article" date="2002" name="Plant Cell Physiol.">
        <title>The ASYMMETRIC LEAVES2 gene of Arabidopsis thaliana, required for formation of a symmetric flat leaf lamina, encodes a member of a novel family of proteins characterized by cysteine repeats and a leucine zipper.</title>
        <authorList>
            <person name="Iwakawa H."/>
            <person name="Ueno Y."/>
            <person name="Semiarti E."/>
            <person name="Onouchi H."/>
            <person name="Kojima S."/>
            <person name="Tsukaya H."/>
            <person name="Hasebe M."/>
            <person name="Soma T."/>
            <person name="Ikezaki M."/>
            <person name="Machida C."/>
            <person name="Machida Y."/>
        </authorList>
    </citation>
    <scope>GENE FAMILY</scope>
    <scope>NOMENCLATURE</scope>
</reference>
<reference key="7">
    <citation type="journal article" date="2005" name="Plant Cell">
        <title>Functional genomic analysis of the AUXIN RESPONSE FACTOR gene family members in Arabidopsis thaliana: unique and overlapping functions of ARF7 and ARF19.</title>
        <authorList>
            <person name="Okushima Y."/>
            <person name="Overvoorde P.J."/>
            <person name="Arima K."/>
            <person name="Alonso J.M."/>
            <person name="Chan A."/>
            <person name="Chang C."/>
            <person name="Ecker J.R."/>
            <person name="Hughes B."/>
            <person name="Lui A."/>
            <person name="Nguyen D."/>
            <person name="Onodera C."/>
            <person name="Quach H."/>
            <person name="Smith A."/>
            <person name="Yu G."/>
            <person name="Theologis A."/>
        </authorList>
    </citation>
    <scope>INDUCTION BY AUXIN</scope>
</reference>
<keyword id="KW-1185">Reference proteome</keyword>
<dbReference type="EMBL" id="AB473848">
    <property type="protein sequence ID" value="BAH10559.1"/>
    <property type="molecule type" value="mRNA"/>
</dbReference>
<dbReference type="EMBL" id="AC005956">
    <property type="protein sequence ID" value="AAD23726.1"/>
    <property type="molecule type" value="Genomic_DNA"/>
</dbReference>
<dbReference type="EMBL" id="CP002685">
    <property type="protein sequence ID" value="AEC10120.1"/>
    <property type="molecule type" value="Genomic_DNA"/>
</dbReference>
<dbReference type="EMBL" id="AY074651">
    <property type="protein sequence ID" value="AAL69467.1"/>
    <property type="status" value="ALT_INIT"/>
    <property type="molecule type" value="mRNA"/>
</dbReference>
<dbReference type="PIR" id="H84853">
    <property type="entry name" value="H84853"/>
</dbReference>
<dbReference type="RefSeq" id="NP_850370.4">
    <property type="nucleotide sequence ID" value="NM_180039.5"/>
</dbReference>
<dbReference type="SMR" id="Q9SLB6"/>
<dbReference type="STRING" id="3702.Q9SLB6"/>
<dbReference type="PaxDb" id="3702-AT2G42440.1"/>
<dbReference type="EnsemblPlants" id="AT2G42440.1">
    <property type="protein sequence ID" value="AT2G42440.1"/>
    <property type="gene ID" value="AT2G42440"/>
</dbReference>
<dbReference type="GeneID" id="818844"/>
<dbReference type="Gramene" id="AT2G42440.1">
    <property type="protein sequence ID" value="AT2G42440.1"/>
    <property type="gene ID" value="AT2G42440"/>
</dbReference>
<dbReference type="KEGG" id="ath:AT2G42440"/>
<dbReference type="Araport" id="AT2G42440"/>
<dbReference type="TAIR" id="AT2G42440">
    <property type="gene designation" value="ASL15"/>
</dbReference>
<dbReference type="eggNOG" id="ENOG502QUV3">
    <property type="taxonomic scope" value="Eukaryota"/>
</dbReference>
<dbReference type="HOGENOM" id="CLU_058353_3_1_1"/>
<dbReference type="InParanoid" id="Q9SLB6"/>
<dbReference type="OMA" id="NIMTSCY"/>
<dbReference type="PhylomeDB" id="Q9SLB6"/>
<dbReference type="PRO" id="PR:Q9SLB6"/>
<dbReference type="Proteomes" id="UP000006548">
    <property type="component" value="Chromosome 2"/>
</dbReference>
<dbReference type="ExpressionAtlas" id="Q9SLB6">
    <property type="expression patterns" value="baseline and differential"/>
</dbReference>
<dbReference type="GO" id="GO:1990110">
    <property type="term" value="P:callus formation"/>
    <property type="evidence" value="ECO:0000315"/>
    <property type="project" value="TAIR"/>
</dbReference>
<dbReference type="InterPro" id="IPR004883">
    <property type="entry name" value="LOB"/>
</dbReference>
<dbReference type="PANTHER" id="PTHR31529">
    <property type="entry name" value="LOB DOMAIN CONTAINING PROTEIN"/>
    <property type="match status" value="1"/>
</dbReference>
<dbReference type="PANTHER" id="PTHR31529:SF65">
    <property type="entry name" value="LOB DOMAIN-CONTAINING PROTEIN 17"/>
    <property type="match status" value="1"/>
</dbReference>
<dbReference type="Pfam" id="PF03195">
    <property type="entry name" value="LOB"/>
    <property type="match status" value="1"/>
</dbReference>
<dbReference type="PROSITE" id="PS50891">
    <property type="entry name" value="LOB"/>
    <property type="match status" value="1"/>
</dbReference>
<protein>
    <recommendedName>
        <fullName>LOB domain-containing protein 17</fullName>
    </recommendedName>
    <alternativeName>
        <fullName>ASYMMETRIC LEAVES 2-like protein 15</fullName>
        <shortName>AS2-like protein 15</shortName>
    </alternativeName>
</protein>
<organism>
    <name type="scientific">Arabidopsis thaliana</name>
    <name type="common">Mouse-ear cress</name>
    <dbReference type="NCBI Taxonomy" id="3702"/>
    <lineage>
        <taxon>Eukaryota</taxon>
        <taxon>Viridiplantae</taxon>
        <taxon>Streptophyta</taxon>
        <taxon>Embryophyta</taxon>
        <taxon>Tracheophyta</taxon>
        <taxon>Spermatophyta</taxon>
        <taxon>Magnoliopsida</taxon>
        <taxon>eudicotyledons</taxon>
        <taxon>Gunneridae</taxon>
        <taxon>Pentapetalae</taxon>
        <taxon>rosids</taxon>
        <taxon>malvids</taxon>
        <taxon>Brassicales</taxon>
        <taxon>Brassicaceae</taxon>
        <taxon>Camelineae</taxon>
        <taxon>Arabidopsis</taxon>
    </lineage>
</organism>
<sequence>MTGSGSPCGACKFLRRRCVKGCVFAPYFCHEQGASHFAAIHQVFGASNASKLLSHLPMEDRREAATTIYYEAQARRQDPIYGCVSHIFSLQQQVVNLQTQLEILKQQATQSMMAIDSPSIENPNYYQDTKPQYLQESHDLHHHHLTTSNCQTEQNSDLKNIMTSCYHQMEIETTPFTGAGGDTMAGSYYYNSSSGCSEELKSVSTNGEFSKYSELDQHLTNTFNQYRHGGNNLISESLGYITYS</sequence>
<accession>Q9SLB6</accession>
<accession>B7XG69</accession>
<accession>Q8S9M2</accession>
<gene>
    <name type="primary">LBD17</name>
    <name type="synonym">ASL15</name>
    <name type="ordered locus">At2g42440</name>
    <name type="ORF">MHK10.16</name>
</gene>
<evidence type="ECO:0000255" key="1">
    <source>
        <dbReference type="PROSITE-ProRule" id="PRU00291"/>
    </source>
</evidence>
<evidence type="ECO:0000269" key="2">
    <source>
    </source>
</evidence>
<evidence type="ECO:0000269" key="3">
    <source>
    </source>
</evidence>
<evidence type="ECO:0000305" key="4"/>
<comment type="tissue specificity">
    <text evidence="2">Expressed in roots, stems, leaves and flowers.</text>
</comment>
<comment type="induction">
    <text evidence="3">By auxin.</text>
</comment>
<comment type="similarity">
    <text evidence="4">Belongs to the LOB domain-containing protein family.</text>
</comment>
<comment type="sequence caution" evidence="4">
    <conflict type="erroneous initiation">
        <sequence resource="EMBL-CDS" id="AAL69467"/>
    </conflict>
</comment>
<proteinExistence type="evidence at transcript level"/>
<feature type="chain" id="PRO_0000132268" description="LOB domain-containing protein 17">
    <location>
        <begin position="1"/>
        <end position="244"/>
    </location>
</feature>
<feature type="domain" description="LOB" evidence="1">
    <location>
        <begin position="6"/>
        <end position="108"/>
    </location>
</feature>
<name>LBD17_ARATH</name>